<accession>A4RK96</accession>
<accession>G4MTI6</accession>
<keyword id="KW-0963">Cytoplasm</keyword>
<keyword id="KW-0539">Nucleus</keyword>
<keyword id="KW-1185">Reference proteome</keyword>
<reference key="1">
    <citation type="journal article" date="2005" name="Nature">
        <title>The genome sequence of the rice blast fungus Magnaporthe grisea.</title>
        <authorList>
            <person name="Dean R.A."/>
            <person name="Talbot N.J."/>
            <person name="Ebbole D.J."/>
            <person name="Farman M.L."/>
            <person name="Mitchell T.K."/>
            <person name="Orbach M.J."/>
            <person name="Thon M.R."/>
            <person name="Kulkarni R."/>
            <person name="Xu J.-R."/>
            <person name="Pan H."/>
            <person name="Read N.D."/>
            <person name="Lee Y.-H."/>
            <person name="Carbone I."/>
            <person name="Brown D."/>
            <person name="Oh Y.Y."/>
            <person name="Donofrio N."/>
            <person name="Jeong J.S."/>
            <person name="Soanes D.M."/>
            <person name="Djonovic S."/>
            <person name="Kolomiets E."/>
            <person name="Rehmeyer C."/>
            <person name="Li W."/>
            <person name="Harding M."/>
            <person name="Kim S."/>
            <person name="Lebrun M.-H."/>
            <person name="Bohnert H."/>
            <person name="Coughlan S."/>
            <person name="Butler J."/>
            <person name="Calvo S.E."/>
            <person name="Ma L.-J."/>
            <person name="Nicol R."/>
            <person name="Purcell S."/>
            <person name="Nusbaum C."/>
            <person name="Galagan J.E."/>
            <person name="Birren B.W."/>
        </authorList>
    </citation>
    <scope>NUCLEOTIDE SEQUENCE [LARGE SCALE GENOMIC DNA]</scope>
    <source>
        <strain>70-15 / ATCC MYA-4617 / FGSC 8958</strain>
    </source>
</reference>
<proteinExistence type="inferred from homology"/>
<protein>
    <recommendedName>
        <fullName>Protein YAE1</fullName>
    </recommendedName>
</protein>
<sequence length="241" mass="25595">MHMNPTPLPHSEDDGVMFASIGQTTLALTEPPSALHATDTLDDVFGSEDVQGSTSFTTEPSDMRRLQSEHTTAGYREGVTVAKAASVQAGFDEGFGLGATLGLSAGEIVGVLEGLAAAVPGDERLAALLGEARGDFSARSIFGATYWDPNGTWTYPVPGQDGGDVIFRDVVEAHPLIAKWRVVLNEQIQNWGVRCDFFAEDQVVDEEVVSQKKLGNPATALKAATSTAPATQSRMSDALQW</sequence>
<evidence type="ECO:0000250" key="1">
    <source>
        <dbReference type="UniProtKB" id="P47118"/>
    </source>
</evidence>
<evidence type="ECO:0000250" key="2">
    <source>
        <dbReference type="UniProtKB" id="Q9NRH1"/>
    </source>
</evidence>
<evidence type="ECO:0000256" key="3">
    <source>
        <dbReference type="SAM" id="MobiDB-lite"/>
    </source>
</evidence>
<evidence type="ECO:0000305" key="4"/>
<comment type="function">
    <text evidence="2">The complex LTO1:YAE1 may function as a target specific adapter that probably recruits apo-RPLI1 to the cytosolic iron-sulfur protein assembly (CIA) complex machinery. May be required for biogenesis of the large ribosomal subunit and initiation of translation.</text>
</comment>
<comment type="subunit">
    <text evidence="2">May form a complex with LTO1.</text>
</comment>
<comment type="subcellular location">
    <subcellularLocation>
        <location evidence="1">Cytoplasm</location>
    </subcellularLocation>
    <subcellularLocation>
        <location evidence="1">Nucleus</location>
    </subcellularLocation>
</comment>
<comment type="similarity">
    <text evidence="4">Belongs to the YAE1 family.</text>
</comment>
<dbReference type="EMBL" id="CM001232">
    <property type="protein sequence ID" value="EHA54737.1"/>
    <property type="molecule type" value="Genomic_DNA"/>
</dbReference>
<dbReference type="RefSeq" id="XP_003714544.1">
    <property type="nucleotide sequence ID" value="XM_003714496.1"/>
</dbReference>
<dbReference type="STRING" id="242507.A4RK96"/>
<dbReference type="EnsemblFungi" id="MGG_01567T0">
    <property type="protein sequence ID" value="MGG_01567T0"/>
    <property type="gene ID" value="MGG_01567"/>
</dbReference>
<dbReference type="GeneID" id="2679513"/>
<dbReference type="KEGG" id="mgr:MGG_01567"/>
<dbReference type="VEuPathDB" id="FungiDB:MGG_01567"/>
<dbReference type="eggNOG" id="KOG4774">
    <property type="taxonomic scope" value="Eukaryota"/>
</dbReference>
<dbReference type="HOGENOM" id="CLU_066684_0_0_1"/>
<dbReference type="InParanoid" id="A4RK96"/>
<dbReference type="OMA" id="MHFQPVE"/>
<dbReference type="OrthoDB" id="20086at2759"/>
<dbReference type="Proteomes" id="UP000009058">
    <property type="component" value="Chromosome 2"/>
</dbReference>
<dbReference type="GO" id="GO:0005737">
    <property type="term" value="C:cytoplasm"/>
    <property type="evidence" value="ECO:0007669"/>
    <property type="project" value="UniProtKB-SubCell"/>
</dbReference>
<dbReference type="GO" id="GO:0005634">
    <property type="term" value="C:nucleus"/>
    <property type="evidence" value="ECO:0007669"/>
    <property type="project" value="UniProtKB-SubCell"/>
</dbReference>
<dbReference type="GO" id="GO:0051604">
    <property type="term" value="P:protein maturation"/>
    <property type="evidence" value="ECO:0000250"/>
    <property type="project" value="UniProtKB"/>
</dbReference>
<dbReference type="InterPro" id="IPR019191">
    <property type="entry name" value="Essential_protein_Yae1_N"/>
</dbReference>
<dbReference type="InterPro" id="IPR038881">
    <property type="entry name" value="Yae1-like"/>
</dbReference>
<dbReference type="PANTHER" id="PTHR18829">
    <property type="entry name" value="PROTEIN YAE1 HOMOLOG"/>
    <property type="match status" value="1"/>
</dbReference>
<dbReference type="PANTHER" id="PTHR18829:SF0">
    <property type="entry name" value="PROTEIN YAE1 HOMOLOG"/>
    <property type="match status" value="1"/>
</dbReference>
<dbReference type="Pfam" id="PF09811">
    <property type="entry name" value="Yae1_N"/>
    <property type="match status" value="1"/>
</dbReference>
<organism>
    <name type="scientific">Pyricularia oryzae (strain 70-15 / ATCC MYA-4617 / FGSC 8958)</name>
    <name type="common">Rice blast fungus</name>
    <name type="synonym">Magnaporthe oryzae</name>
    <dbReference type="NCBI Taxonomy" id="242507"/>
    <lineage>
        <taxon>Eukaryota</taxon>
        <taxon>Fungi</taxon>
        <taxon>Dikarya</taxon>
        <taxon>Ascomycota</taxon>
        <taxon>Pezizomycotina</taxon>
        <taxon>Sordariomycetes</taxon>
        <taxon>Sordariomycetidae</taxon>
        <taxon>Magnaporthales</taxon>
        <taxon>Pyriculariaceae</taxon>
        <taxon>Pyricularia</taxon>
    </lineage>
</organism>
<feature type="chain" id="PRO_0000324429" description="Protein YAE1">
    <location>
        <begin position="1"/>
        <end position="241"/>
    </location>
</feature>
<feature type="region of interest" description="deca-GX3 motif; required for interaction with LTO1" evidence="1">
    <location>
        <begin position="74"/>
        <end position="114"/>
    </location>
</feature>
<feature type="region of interest" description="Disordered" evidence="3">
    <location>
        <begin position="222"/>
        <end position="241"/>
    </location>
</feature>
<feature type="compositionally biased region" description="Polar residues" evidence="3">
    <location>
        <begin position="224"/>
        <end position="235"/>
    </location>
</feature>
<gene>
    <name type="primary">YAE1</name>
    <name type="ORF">MGG_01567</name>
</gene>
<name>YAE1_PYRO7</name>